<proteinExistence type="inferred from homology"/>
<keyword id="KW-0119">Carbohydrate metabolism</keyword>
<keyword id="KW-0413">Isomerase</keyword>
<keyword id="KW-0521">NADP</keyword>
<sequence length="310" mass="34780">MIIVTGGAGFIGSNIVKALNNIGYKDILVVDNLKDGTKFVNLVDLDIADYMDKEDFVASIVAGDDMGDIDAIFHEGACSSTTEWDGKYMMDNNYQYSKDILHFCLDRSIPFLYASSAATYGGRTDNFIEDRQYEQPLNVYGYSKFLFDQYVREILPQADSQICGFRYFNVYGPREGHKGSMASVAFHLNNQINAGERPKLFAGSENFKRDFIYVGDVADVNLWFWQNGVSGIFNCGTGRAESFQAVADAVVDYHQSGPVEYIEFPEKLKGRYQAYTQADLTKLRAAGYGKPFKTVAEGVKEYLAWLNRSV</sequence>
<gene>
    <name evidence="1" type="primary">hldD</name>
    <name type="ordered locus">YpAngola_A0064</name>
</gene>
<feature type="chain" id="PRO_1000148099" description="ADP-L-glycero-D-manno-heptose-6-epimerase">
    <location>
        <begin position="1"/>
        <end position="310"/>
    </location>
</feature>
<feature type="active site" description="Proton acceptor" evidence="1">
    <location>
        <position position="140"/>
    </location>
</feature>
<feature type="active site" description="Proton acceptor" evidence="1">
    <location>
        <position position="178"/>
    </location>
</feature>
<feature type="binding site" evidence="1">
    <location>
        <begin position="10"/>
        <end position="11"/>
    </location>
    <ligand>
        <name>NADP(+)</name>
        <dbReference type="ChEBI" id="CHEBI:58349"/>
    </ligand>
</feature>
<feature type="binding site" evidence="1">
    <location>
        <begin position="31"/>
        <end position="32"/>
    </location>
    <ligand>
        <name>NADP(+)</name>
        <dbReference type="ChEBI" id="CHEBI:58349"/>
    </ligand>
</feature>
<feature type="binding site" evidence="1">
    <location>
        <position position="38"/>
    </location>
    <ligand>
        <name>NADP(+)</name>
        <dbReference type="ChEBI" id="CHEBI:58349"/>
    </ligand>
</feature>
<feature type="binding site" evidence="1">
    <location>
        <position position="53"/>
    </location>
    <ligand>
        <name>NADP(+)</name>
        <dbReference type="ChEBI" id="CHEBI:58349"/>
    </ligand>
</feature>
<feature type="binding site" evidence="1">
    <location>
        <begin position="75"/>
        <end position="79"/>
    </location>
    <ligand>
        <name>NADP(+)</name>
        <dbReference type="ChEBI" id="CHEBI:58349"/>
    </ligand>
</feature>
<feature type="binding site" evidence="1">
    <location>
        <position position="92"/>
    </location>
    <ligand>
        <name>NADP(+)</name>
        <dbReference type="ChEBI" id="CHEBI:58349"/>
    </ligand>
</feature>
<feature type="binding site" evidence="1">
    <location>
        <position position="144"/>
    </location>
    <ligand>
        <name>NADP(+)</name>
        <dbReference type="ChEBI" id="CHEBI:58349"/>
    </ligand>
</feature>
<feature type="binding site" evidence="1">
    <location>
        <position position="169"/>
    </location>
    <ligand>
        <name>substrate</name>
    </ligand>
</feature>
<feature type="binding site" evidence="1">
    <location>
        <position position="170"/>
    </location>
    <ligand>
        <name>NADP(+)</name>
        <dbReference type="ChEBI" id="CHEBI:58349"/>
    </ligand>
</feature>
<feature type="binding site" evidence="1">
    <location>
        <position position="178"/>
    </location>
    <ligand>
        <name>NADP(+)</name>
        <dbReference type="ChEBI" id="CHEBI:58349"/>
    </ligand>
</feature>
<feature type="binding site" evidence="1">
    <location>
        <position position="180"/>
    </location>
    <ligand>
        <name>substrate</name>
    </ligand>
</feature>
<feature type="binding site" evidence="1">
    <location>
        <position position="187"/>
    </location>
    <ligand>
        <name>substrate</name>
    </ligand>
</feature>
<feature type="binding site" evidence="1">
    <location>
        <begin position="201"/>
        <end position="204"/>
    </location>
    <ligand>
        <name>substrate</name>
    </ligand>
</feature>
<feature type="binding site" evidence="1">
    <location>
        <position position="209"/>
    </location>
    <ligand>
        <name>substrate</name>
    </ligand>
</feature>
<feature type="binding site" evidence="1">
    <location>
        <position position="272"/>
    </location>
    <ligand>
        <name>substrate</name>
    </ligand>
</feature>
<evidence type="ECO:0000255" key="1">
    <source>
        <dbReference type="HAMAP-Rule" id="MF_01601"/>
    </source>
</evidence>
<comment type="function">
    <text evidence="1">Catalyzes the interconversion between ADP-D-glycero-beta-D-manno-heptose and ADP-L-glycero-beta-D-manno-heptose via an epimerization at carbon 6 of the heptose.</text>
</comment>
<comment type="catalytic activity">
    <reaction evidence="1">
        <text>ADP-D-glycero-beta-D-manno-heptose = ADP-L-glycero-beta-D-manno-heptose</text>
        <dbReference type="Rhea" id="RHEA:17577"/>
        <dbReference type="ChEBI" id="CHEBI:59967"/>
        <dbReference type="ChEBI" id="CHEBI:61506"/>
        <dbReference type="EC" id="5.1.3.20"/>
    </reaction>
</comment>
<comment type="cofactor">
    <cofactor evidence="1">
        <name>NADP(+)</name>
        <dbReference type="ChEBI" id="CHEBI:58349"/>
    </cofactor>
    <text evidence="1">Binds 1 NADP(+) per subunit.</text>
</comment>
<comment type="pathway">
    <text evidence="1">Nucleotide-sugar biosynthesis; ADP-L-glycero-beta-D-manno-heptose biosynthesis; ADP-L-glycero-beta-D-manno-heptose from D-glycero-beta-D-manno-heptose 7-phosphate: step 4/4.</text>
</comment>
<comment type="subunit">
    <text evidence="1">Homopentamer.</text>
</comment>
<comment type="domain">
    <text evidence="1">Contains a large N-terminal NADP-binding domain, and a smaller C-terminal substrate-binding domain.</text>
</comment>
<comment type="similarity">
    <text evidence="1">Belongs to the NAD(P)-dependent epimerase/dehydratase family. HldD subfamily.</text>
</comment>
<dbReference type="EC" id="5.1.3.20" evidence="1"/>
<dbReference type="EMBL" id="CP000901">
    <property type="protein sequence ID" value="ABX84929.1"/>
    <property type="molecule type" value="Genomic_DNA"/>
</dbReference>
<dbReference type="SMR" id="A9R683"/>
<dbReference type="KEGG" id="ypg:YpAngola_A0064"/>
<dbReference type="PATRIC" id="fig|349746.12.peg.1007"/>
<dbReference type="UniPathway" id="UPA00356">
    <property type="reaction ID" value="UER00440"/>
</dbReference>
<dbReference type="GO" id="GO:0008712">
    <property type="term" value="F:ADP-glyceromanno-heptose 6-epimerase activity"/>
    <property type="evidence" value="ECO:0007669"/>
    <property type="project" value="UniProtKB-UniRule"/>
</dbReference>
<dbReference type="GO" id="GO:0050661">
    <property type="term" value="F:NADP binding"/>
    <property type="evidence" value="ECO:0007669"/>
    <property type="project" value="InterPro"/>
</dbReference>
<dbReference type="GO" id="GO:0097171">
    <property type="term" value="P:ADP-L-glycero-beta-D-manno-heptose biosynthetic process"/>
    <property type="evidence" value="ECO:0007669"/>
    <property type="project" value="UniProtKB-UniPathway"/>
</dbReference>
<dbReference type="GO" id="GO:0005975">
    <property type="term" value="P:carbohydrate metabolic process"/>
    <property type="evidence" value="ECO:0007669"/>
    <property type="project" value="UniProtKB-UniRule"/>
</dbReference>
<dbReference type="CDD" id="cd05248">
    <property type="entry name" value="ADP_GME_SDR_e"/>
    <property type="match status" value="1"/>
</dbReference>
<dbReference type="Gene3D" id="3.40.50.720">
    <property type="entry name" value="NAD(P)-binding Rossmann-like Domain"/>
    <property type="match status" value="1"/>
</dbReference>
<dbReference type="Gene3D" id="3.90.25.10">
    <property type="entry name" value="UDP-galactose 4-epimerase, domain 1"/>
    <property type="match status" value="1"/>
</dbReference>
<dbReference type="HAMAP" id="MF_01601">
    <property type="entry name" value="Heptose_epimerase"/>
    <property type="match status" value="1"/>
</dbReference>
<dbReference type="InterPro" id="IPR001509">
    <property type="entry name" value="Epimerase_deHydtase"/>
</dbReference>
<dbReference type="InterPro" id="IPR011912">
    <property type="entry name" value="Heptose_epim"/>
</dbReference>
<dbReference type="InterPro" id="IPR036291">
    <property type="entry name" value="NAD(P)-bd_dom_sf"/>
</dbReference>
<dbReference type="NCBIfam" id="TIGR02197">
    <property type="entry name" value="heptose_epim"/>
    <property type="match status" value="1"/>
</dbReference>
<dbReference type="NCBIfam" id="NF008360">
    <property type="entry name" value="PRK11150.1"/>
    <property type="match status" value="1"/>
</dbReference>
<dbReference type="PANTHER" id="PTHR43103:SF3">
    <property type="entry name" value="ADP-L-GLYCERO-D-MANNO-HEPTOSE-6-EPIMERASE"/>
    <property type="match status" value="1"/>
</dbReference>
<dbReference type="PANTHER" id="PTHR43103">
    <property type="entry name" value="NUCLEOSIDE-DIPHOSPHATE-SUGAR EPIMERASE"/>
    <property type="match status" value="1"/>
</dbReference>
<dbReference type="Pfam" id="PF01370">
    <property type="entry name" value="Epimerase"/>
    <property type="match status" value="1"/>
</dbReference>
<dbReference type="SUPFAM" id="SSF51735">
    <property type="entry name" value="NAD(P)-binding Rossmann-fold domains"/>
    <property type="match status" value="1"/>
</dbReference>
<reference key="1">
    <citation type="journal article" date="2010" name="J. Bacteriol.">
        <title>Genome sequence of the deep-rooted Yersinia pestis strain Angola reveals new insights into the evolution and pangenome of the plague bacterium.</title>
        <authorList>
            <person name="Eppinger M."/>
            <person name="Worsham P.L."/>
            <person name="Nikolich M.P."/>
            <person name="Riley D.R."/>
            <person name="Sebastian Y."/>
            <person name="Mou S."/>
            <person name="Achtman M."/>
            <person name="Lindler L.E."/>
            <person name="Ravel J."/>
        </authorList>
    </citation>
    <scope>NUCLEOTIDE SEQUENCE [LARGE SCALE GENOMIC DNA]</scope>
    <source>
        <strain>Angola</strain>
    </source>
</reference>
<name>HLDD_YERPG</name>
<accession>A9R683</accession>
<organism>
    <name type="scientific">Yersinia pestis bv. Antiqua (strain Angola)</name>
    <dbReference type="NCBI Taxonomy" id="349746"/>
    <lineage>
        <taxon>Bacteria</taxon>
        <taxon>Pseudomonadati</taxon>
        <taxon>Pseudomonadota</taxon>
        <taxon>Gammaproteobacteria</taxon>
        <taxon>Enterobacterales</taxon>
        <taxon>Yersiniaceae</taxon>
        <taxon>Yersinia</taxon>
    </lineage>
</organism>
<protein>
    <recommendedName>
        <fullName evidence="1">ADP-L-glycero-D-manno-heptose-6-epimerase</fullName>
        <ecNumber evidence="1">5.1.3.20</ecNumber>
    </recommendedName>
    <alternativeName>
        <fullName evidence="1">ADP-L-glycero-beta-D-manno-heptose-6-epimerase</fullName>
        <shortName evidence="1">ADP-glyceromanno-heptose 6-epimerase</shortName>
        <shortName evidence="1">ADP-hep 6-epimerase</shortName>
        <shortName evidence="1">AGME</shortName>
    </alternativeName>
</protein>